<reference key="1">
    <citation type="journal article" date="2003" name="J. Bacteriol.">
        <title>Complete genome sequence of the ammonia-oxidizing bacterium and obligate chemolithoautotroph Nitrosomonas europaea.</title>
        <authorList>
            <person name="Chain P."/>
            <person name="Lamerdin J.E."/>
            <person name="Larimer F.W."/>
            <person name="Regala W."/>
            <person name="Lao V."/>
            <person name="Land M.L."/>
            <person name="Hauser L."/>
            <person name="Hooper A.B."/>
            <person name="Klotz M.G."/>
            <person name="Norton J."/>
            <person name="Sayavedra-Soto L.A."/>
            <person name="Arciero D.M."/>
            <person name="Hommes N.G."/>
            <person name="Whittaker M.M."/>
            <person name="Arp D.J."/>
        </authorList>
    </citation>
    <scope>NUCLEOTIDE SEQUENCE [LARGE SCALE GENOMIC DNA]</scope>
    <source>
        <strain>ATCC 19718 / CIP 103999 / KCTC 2705 / NBRC 14298</strain>
    </source>
</reference>
<name>EX7S_NITEU</name>
<keyword id="KW-0963">Cytoplasm</keyword>
<keyword id="KW-0269">Exonuclease</keyword>
<keyword id="KW-0378">Hydrolase</keyword>
<keyword id="KW-0540">Nuclease</keyword>
<keyword id="KW-1185">Reference proteome</keyword>
<feature type="chain" id="PRO_0000206979" description="Exodeoxyribonuclease 7 small subunit">
    <location>
        <begin position="1"/>
        <end position="89"/>
    </location>
</feature>
<feature type="region of interest" description="Disordered" evidence="2">
    <location>
        <begin position="1"/>
        <end position="22"/>
    </location>
</feature>
<accession>Q82VD5</accession>
<organism>
    <name type="scientific">Nitrosomonas europaea (strain ATCC 19718 / CIP 103999 / KCTC 2705 / NBRC 14298)</name>
    <dbReference type="NCBI Taxonomy" id="228410"/>
    <lineage>
        <taxon>Bacteria</taxon>
        <taxon>Pseudomonadati</taxon>
        <taxon>Pseudomonadota</taxon>
        <taxon>Betaproteobacteria</taxon>
        <taxon>Nitrosomonadales</taxon>
        <taxon>Nitrosomonadaceae</taxon>
        <taxon>Nitrosomonas</taxon>
    </lineage>
</organism>
<protein>
    <recommendedName>
        <fullName evidence="1">Exodeoxyribonuclease 7 small subunit</fullName>
        <ecNumber evidence="1">3.1.11.6</ecNumber>
    </recommendedName>
    <alternativeName>
        <fullName evidence="1">Exodeoxyribonuclease VII small subunit</fullName>
        <shortName evidence="1">Exonuclease VII small subunit</shortName>
    </alternativeName>
</protein>
<sequence length="89" mass="9976">MRKKSSSNKEETALHPPPENFETATAELEQIVAGMETGQMSLEDALSAYKRGVELLQYCQNILKNSQQQIKILEADMLKHFSPAEHDAS</sequence>
<evidence type="ECO:0000255" key="1">
    <source>
        <dbReference type="HAMAP-Rule" id="MF_00337"/>
    </source>
</evidence>
<evidence type="ECO:0000256" key="2">
    <source>
        <dbReference type="SAM" id="MobiDB-lite"/>
    </source>
</evidence>
<dbReference type="EC" id="3.1.11.6" evidence="1"/>
<dbReference type="EMBL" id="AL954747">
    <property type="protein sequence ID" value="CAD85070.1"/>
    <property type="molecule type" value="Genomic_DNA"/>
</dbReference>
<dbReference type="RefSeq" id="WP_011111750.1">
    <property type="nucleotide sequence ID" value="NC_004757.1"/>
</dbReference>
<dbReference type="SMR" id="Q82VD5"/>
<dbReference type="STRING" id="228410.NE1159"/>
<dbReference type="GeneID" id="87104339"/>
<dbReference type="KEGG" id="neu:NE1159"/>
<dbReference type="eggNOG" id="COG1722">
    <property type="taxonomic scope" value="Bacteria"/>
</dbReference>
<dbReference type="HOGENOM" id="CLU_145918_2_0_4"/>
<dbReference type="OrthoDB" id="287668at2"/>
<dbReference type="PhylomeDB" id="Q82VD5"/>
<dbReference type="Proteomes" id="UP000001416">
    <property type="component" value="Chromosome"/>
</dbReference>
<dbReference type="GO" id="GO:0005829">
    <property type="term" value="C:cytosol"/>
    <property type="evidence" value="ECO:0007669"/>
    <property type="project" value="TreeGrafter"/>
</dbReference>
<dbReference type="GO" id="GO:0009318">
    <property type="term" value="C:exodeoxyribonuclease VII complex"/>
    <property type="evidence" value="ECO:0007669"/>
    <property type="project" value="InterPro"/>
</dbReference>
<dbReference type="GO" id="GO:0008855">
    <property type="term" value="F:exodeoxyribonuclease VII activity"/>
    <property type="evidence" value="ECO:0007669"/>
    <property type="project" value="UniProtKB-UniRule"/>
</dbReference>
<dbReference type="GO" id="GO:0006308">
    <property type="term" value="P:DNA catabolic process"/>
    <property type="evidence" value="ECO:0007669"/>
    <property type="project" value="UniProtKB-UniRule"/>
</dbReference>
<dbReference type="Gene3D" id="1.10.287.1040">
    <property type="entry name" value="Exonuclease VII, small subunit"/>
    <property type="match status" value="1"/>
</dbReference>
<dbReference type="HAMAP" id="MF_00337">
    <property type="entry name" value="Exonuc_7_S"/>
    <property type="match status" value="1"/>
</dbReference>
<dbReference type="InterPro" id="IPR003761">
    <property type="entry name" value="Exonuc_VII_S"/>
</dbReference>
<dbReference type="InterPro" id="IPR037004">
    <property type="entry name" value="Exonuc_VII_ssu_sf"/>
</dbReference>
<dbReference type="NCBIfam" id="NF002141">
    <property type="entry name" value="PRK00977.1-5"/>
    <property type="match status" value="1"/>
</dbReference>
<dbReference type="NCBIfam" id="TIGR01280">
    <property type="entry name" value="xseB"/>
    <property type="match status" value="1"/>
</dbReference>
<dbReference type="PANTHER" id="PTHR34137">
    <property type="entry name" value="EXODEOXYRIBONUCLEASE 7 SMALL SUBUNIT"/>
    <property type="match status" value="1"/>
</dbReference>
<dbReference type="PANTHER" id="PTHR34137:SF1">
    <property type="entry name" value="EXODEOXYRIBONUCLEASE 7 SMALL SUBUNIT"/>
    <property type="match status" value="1"/>
</dbReference>
<dbReference type="Pfam" id="PF02609">
    <property type="entry name" value="Exonuc_VII_S"/>
    <property type="match status" value="1"/>
</dbReference>
<dbReference type="PIRSF" id="PIRSF006488">
    <property type="entry name" value="Exonuc_VII_S"/>
    <property type="match status" value="1"/>
</dbReference>
<dbReference type="SUPFAM" id="SSF116842">
    <property type="entry name" value="XseB-like"/>
    <property type="match status" value="1"/>
</dbReference>
<gene>
    <name evidence="1" type="primary">xseB</name>
    <name type="ordered locus">NE1159</name>
</gene>
<comment type="function">
    <text evidence="1">Bidirectionally degrades single-stranded DNA into large acid-insoluble oligonucleotides, which are then degraded further into small acid-soluble oligonucleotides.</text>
</comment>
<comment type="catalytic activity">
    <reaction evidence="1">
        <text>Exonucleolytic cleavage in either 5'- to 3'- or 3'- to 5'-direction to yield nucleoside 5'-phosphates.</text>
        <dbReference type="EC" id="3.1.11.6"/>
    </reaction>
</comment>
<comment type="subunit">
    <text evidence="1">Heterooligomer composed of large and small subunits.</text>
</comment>
<comment type="subcellular location">
    <subcellularLocation>
        <location evidence="1">Cytoplasm</location>
    </subcellularLocation>
</comment>
<comment type="similarity">
    <text evidence="1">Belongs to the XseB family.</text>
</comment>
<proteinExistence type="inferred from homology"/>